<evidence type="ECO:0000250" key="1"/>
<evidence type="ECO:0000250" key="2">
    <source>
        <dbReference type="UniProtKB" id="Q8BZ21"/>
    </source>
</evidence>
<evidence type="ECO:0000250" key="3">
    <source>
        <dbReference type="UniProtKB" id="Q92794"/>
    </source>
</evidence>
<evidence type="ECO:0000250" key="4">
    <source>
        <dbReference type="UniProtKB" id="Q9H7Z6"/>
    </source>
</evidence>
<evidence type="ECO:0000255" key="5">
    <source>
        <dbReference type="PROSITE-ProRule" id="PRU00146"/>
    </source>
</evidence>
<evidence type="ECO:0000255" key="6">
    <source>
        <dbReference type="PROSITE-ProRule" id="PRU00837"/>
    </source>
</evidence>
<evidence type="ECO:0000255" key="7">
    <source>
        <dbReference type="PROSITE-ProRule" id="PRU01063"/>
    </source>
</evidence>
<evidence type="ECO:0000255" key="8">
    <source>
        <dbReference type="PROSITE-ProRule" id="PRU01358"/>
    </source>
</evidence>
<evidence type="ECO:0000256" key="9">
    <source>
        <dbReference type="SAM" id="MobiDB-lite"/>
    </source>
</evidence>
<evidence type="ECO:0000305" key="10"/>
<evidence type="ECO:0007744" key="11">
    <source>
    </source>
</evidence>
<evidence type="ECO:0007744" key="12">
    <source>
    </source>
</evidence>
<name>KAT6A_RAT</name>
<accession>Q5TKR9</accession>
<reference key="1">
    <citation type="journal article" date="2004" name="Nature">
        <title>Genome sequence of the Brown Norway rat yields insights into mammalian evolution.</title>
        <authorList>
            <person name="Gibbs R.A."/>
            <person name="Weinstock G.M."/>
            <person name="Metzker M.L."/>
            <person name="Muzny D.M."/>
            <person name="Sodergren E.J."/>
            <person name="Scherer S."/>
            <person name="Scott G."/>
            <person name="Steffen D."/>
            <person name="Worley K.C."/>
            <person name="Burch P.E."/>
            <person name="Okwuonu G."/>
            <person name="Hines S."/>
            <person name="Lewis L."/>
            <person name="Deramo C."/>
            <person name="Delgado O."/>
            <person name="Dugan-Rocha S."/>
            <person name="Miner G."/>
            <person name="Morgan M."/>
            <person name="Hawes A."/>
            <person name="Gill R."/>
            <person name="Holt R.A."/>
            <person name="Adams M.D."/>
            <person name="Amanatides P.G."/>
            <person name="Baden-Tillson H."/>
            <person name="Barnstead M."/>
            <person name="Chin S."/>
            <person name="Evans C.A."/>
            <person name="Ferriera S."/>
            <person name="Fosler C."/>
            <person name="Glodek A."/>
            <person name="Gu Z."/>
            <person name="Jennings D."/>
            <person name="Kraft C.L."/>
            <person name="Nguyen T."/>
            <person name="Pfannkoch C.M."/>
            <person name="Sitter C."/>
            <person name="Sutton G.G."/>
            <person name="Venter J.C."/>
            <person name="Woodage T."/>
            <person name="Smith D."/>
            <person name="Lee H.-M."/>
            <person name="Gustafson E."/>
            <person name="Cahill P."/>
            <person name="Kana A."/>
            <person name="Doucette-Stamm L."/>
            <person name="Weinstock K."/>
            <person name="Fechtel K."/>
            <person name="Weiss R.B."/>
            <person name="Dunn D.M."/>
            <person name="Green E.D."/>
            <person name="Blakesley R.W."/>
            <person name="Bouffard G.G."/>
            <person name="De Jong P.J."/>
            <person name="Osoegawa K."/>
            <person name="Zhu B."/>
            <person name="Marra M."/>
            <person name="Schein J."/>
            <person name="Bosdet I."/>
            <person name="Fjell C."/>
            <person name="Jones S."/>
            <person name="Krzywinski M."/>
            <person name="Mathewson C."/>
            <person name="Siddiqui A."/>
            <person name="Wye N."/>
            <person name="McPherson J."/>
            <person name="Zhao S."/>
            <person name="Fraser C.M."/>
            <person name="Shetty J."/>
            <person name="Shatsman S."/>
            <person name="Geer K."/>
            <person name="Chen Y."/>
            <person name="Abramzon S."/>
            <person name="Nierman W.C."/>
            <person name="Havlak P.H."/>
            <person name="Chen R."/>
            <person name="Durbin K.J."/>
            <person name="Egan A."/>
            <person name="Ren Y."/>
            <person name="Song X.-Z."/>
            <person name="Li B."/>
            <person name="Liu Y."/>
            <person name="Qin X."/>
            <person name="Cawley S."/>
            <person name="Cooney A.J."/>
            <person name="D'Souza L.M."/>
            <person name="Martin K."/>
            <person name="Wu J.Q."/>
            <person name="Gonzalez-Garay M.L."/>
            <person name="Jackson A.R."/>
            <person name="Kalafus K.J."/>
            <person name="McLeod M.P."/>
            <person name="Milosavljevic A."/>
            <person name="Virk D."/>
            <person name="Volkov A."/>
            <person name="Wheeler D.A."/>
            <person name="Zhang Z."/>
            <person name="Bailey J.A."/>
            <person name="Eichler E.E."/>
            <person name="Tuzun E."/>
            <person name="Birney E."/>
            <person name="Mongin E."/>
            <person name="Ureta-Vidal A."/>
            <person name="Woodwark C."/>
            <person name="Zdobnov E."/>
            <person name="Bork P."/>
            <person name="Suyama M."/>
            <person name="Torrents D."/>
            <person name="Alexandersson M."/>
            <person name="Trask B.J."/>
            <person name="Young J.M."/>
            <person name="Huang H."/>
            <person name="Wang H."/>
            <person name="Xing H."/>
            <person name="Daniels S."/>
            <person name="Gietzen D."/>
            <person name="Schmidt J."/>
            <person name="Stevens K."/>
            <person name="Vitt U."/>
            <person name="Wingrove J."/>
            <person name="Camara F."/>
            <person name="Mar Alba M."/>
            <person name="Abril J.F."/>
            <person name="Guigo R."/>
            <person name="Smit A."/>
            <person name="Dubchak I."/>
            <person name="Rubin E.M."/>
            <person name="Couronne O."/>
            <person name="Poliakov A."/>
            <person name="Huebner N."/>
            <person name="Ganten D."/>
            <person name="Goesele C."/>
            <person name="Hummel O."/>
            <person name="Kreitler T."/>
            <person name="Lee Y.-A."/>
            <person name="Monti J."/>
            <person name="Schulz H."/>
            <person name="Zimdahl H."/>
            <person name="Himmelbauer H."/>
            <person name="Lehrach H."/>
            <person name="Jacob H.J."/>
            <person name="Bromberg S."/>
            <person name="Gullings-Handley J."/>
            <person name="Jensen-Seaman M.I."/>
            <person name="Kwitek A.E."/>
            <person name="Lazar J."/>
            <person name="Pasko D."/>
            <person name="Tonellato P.J."/>
            <person name="Twigger S."/>
            <person name="Ponting C.P."/>
            <person name="Duarte J.M."/>
            <person name="Rice S."/>
            <person name="Goodstadt L."/>
            <person name="Beatson S.A."/>
            <person name="Emes R.D."/>
            <person name="Winter E.E."/>
            <person name="Webber C."/>
            <person name="Brandt P."/>
            <person name="Nyakatura G."/>
            <person name="Adetobi M."/>
            <person name="Chiaromonte F."/>
            <person name="Elnitski L."/>
            <person name="Eswara P."/>
            <person name="Hardison R.C."/>
            <person name="Hou M."/>
            <person name="Kolbe D."/>
            <person name="Makova K."/>
            <person name="Miller W."/>
            <person name="Nekrutenko A."/>
            <person name="Riemer C."/>
            <person name="Schwartz S."/>
            <person name="Taylor J."/>
            <person name="Yang S."/>
            <person name="Zhang Y."/>
            <person name="Lindpaintner K."/>
            <person name="Andrews T.D."/>
            <person name="Caccamo M."/>
            <person name="Clamp M."/>
            <person name="Clarke L."/>
            <person name="Curwen V."/>
            <person name="Durbin R.M."/>
            <person name="Eyras E."/>
            <person name="Searle S.M."/>
            <person name="Cooper G.M."/>
            <person name="Batzoglou S."/>
            <person name="Brudno M."/>
            <person name="Sidow A."/>
            <person name="Stone E.A."/>
            <person name="Payseur B.A."/>
            <person name="Bourque G."/>
            <person name="Lopez-Otin C."/>
            <person name="Puente X.S."/>
            <person name="Chakrabarti K."/>
            <person name="Chatterji S."/>
            <person name="Dewey C."/>
            <person name="Pachter L."/>
            <person name="Bray N."/>
            <person name="Yap V.B."/>
            <person name="Caspi A."/>
            <person name="Tesler G."/>
            <person name="Pevzner P.A."/>
            <person name="Haussler D."/>
            <person name="Roskin K.M."/>
            <person name="Baertsch R."/>
            <person name="Clawson H."/>
            <person name="Furey T.S."/>
            <person name="Hinrichs A.S."/>
            <person name="Karolchik D."/>
            <person name="Kent W.J."/>
            <person name="Rosenbloom K.R."/>
            <person name="Trumbower H."/>
            <person name="Weirauch M."/>
            <person name="Cooper D.N."/>
            <person name="Stenson P.D."/>
            <person name="Ma B."/>
            <person name="Brent M."/>
            <person name="Arumugam M."/>
            <person name="Shteynberg D."/>
            <person name="Copley R.R."/>
            <person name="Taylor M.S."/>
            <person name="Riethman H."/>
            <person name="Mudunuri U."/>
            <person name="Peterson J."/>
            <person name="Guyer M."/>
            <person name="Felsenfeld A."/>
            <person name="Old S."/>
            <person name="Mockrin S."/>
            <person name="Collins F.S."/>
        </authorList>
    </citation>
    <scope>NUCLEOTIDE SEQUENCE [LARGE SCALE GENOMIC DNA]</scope>
    <source>
        <strain>Brown Norway</strain>
    </source>
</reference>
<reference key="2">
    <citation type="submission" date="2004-11" db="EMBL/GenBank/DDBJ databases">
        <title>Cloning and characterization of a cDNA encoding histone acetyltransferase MOZ (monocytic leukemia zinc finger protein) from rat.</title>
        <authorList>
            <person name="Ohta K."/>
            <person name="Osada S."/>
            <person name="Nishikawa J."/>
            <person name="Nishihara T."/>
        </authorList>
    </citation>
    <scope>NUCLEOTIDE SEQUENCE [MRNA] OF 8-1998</scope>
    <source>
        <strain>Wistar</strain>
    </source>
</reference>
<reference key="3">
    <citation type="journal article" date="2006" name="Proc. Natl. Acad. Sci. U.S.A.">
        <title>Quantitative phosphoproteomics of vasopressin-sensitive renal cells: regulation of aquaporin-2 phosphorylation at two sites.</title>
        <authorList>
            <person name="Hoffert J.D."/>
            <person name="Pisitkun T."/>
            <person name="Wang G."/>
            <person name="Shen R.-F."/>
            <person name="Knepper M.A."/>
        </authorList>
    </citation>
    <scope>PHOSPHORYLATION [LARGE SCALE ANALYSIS] AT TYR-900</scope>
    <scope>IDENTIFICATION BY MASS SPECTROMETRY [LARGE SCALE ANALYSIS]</scope>
</reference>
<reference key="4">
    <citation type="journal article" date="2012" name="Nat. Commun.">
        <title>Quantitative maps of protein phosphorylation sites across 14 different rat organs and tissues.</title>
        <authorList>
            <person name="Lundby A."/>
            <person name="Secher A."/>
            <person name="Lage K."/>
            <person name="Nordsborg N.B."/>
            <person name="Dmytriyev A."/>
            <person name="Lundby C."/>
            <person name="Olsen J.V."/>
        </authorList>
    </citation>
    <scope>PHOSPHORYLATION [LARGE SCALE ANALYSIS] AT SER-1114</scope>
    <scope>IDENTIFICATION BY MASS SPECTROMETRY [LARGE SCALE ANALYSIS]</scope>
</reference>
<keyword id="KW-0007">Acetylation</keyword>
<keyword id="KW-0010">Activator</keyword>
<keyword id="KW-0012">Acyltransferase</keyword>
<keyword id="KW-0156">Chromatin regulator</keyword>
<keyword id="KW-1017">Isopeptide bond</keyword>
<keyword id="KW-0479">Metal-binding</keyword>
<keyword id="KW-0539">Nucleus</keyword>
<keyword id="KW-0597">Phosphoprotein</keyword>
<keyword id="KW-1185">Reference proteome</keyword>
<keyword id="KW-0677">Repeat</keyword>
<keyword id="KW-0678">Repressor</keyword>
<keyword id="KW-0804">Transcription</keyword>
<keyword id="KW-0805">Transcription regulation</keyword>
<keyword id="KW-0808">Transferase</keyword>
<keyword id="KW-0832">Ubl conjugation</keyword>
<keyword id="KW-0862">Zinc</keyword>
<keyword id="KW-0863">Zinc-finger</keyword>
<feature type="chain" id="PRO_0000051574" description="Histone acetyltransferase KAT6A">
    <location>
        <begin position="1"/>
        <end position="1998"/>
    </location>
</feature>
<feature type="domain" description="SAMD1-like winged helix (WH)" evidence="8">
    <location>
        <begin position="1"/>
        <end position="77"/>
    </location>
</feature>
<feature type="domain" description="H15" evidence="6">
    <location>
        <begin position="95"/>
        <end position="171"/>
    </location>
</feature>
<feature type="domain" description="MYST-type HAT" evidence="7">
    <location>
        <begin position="502"/>
        <end position="776"/>
    </location>
</feature>
<feature type="zinc finger region" description="PHD-type 1" evidence="5">
    <location>
        <begin position="199"/>
        <end position="258"/>
    </location>
</feature>
<feature type="zinc finger region" description="PHD-type 2" evidence="5">
    <location>
        <begin position="255"/>
        <end position="306"/>
    </location>
</feature>
<feature type="zinc finger region" description="C2HC MYST-type" evidence="7">
    <location>
        <begin position="535"/>
        <end position="560"/>
    </location>
</feature>
<feature type="region of interest" description="Required for activation of RUNX1-1" evidence="3">
    <location>
        <begin position="1"/>
        <end position="144"/>
    </location>
</feature>
<feature type="region of interest" description="Required for nuclear localization" evidence="1">
    <location>
        <begin position="52"/>
        <end position="166"/>
    </location>
</feature>
<feature type="region of interest" description="Disordered" evidence="9">
    <location>
        <begin position="72"/>
        <end position="93"/>
    </location>
</feature>
<feature type="region of interest" description="Interaction with PML" evidence="1">
    <location>
        <begin position="144"/>
        <end position="662"/>
    </location>
</feature>
<feature type="region of interest" description="Interaction with RUNX1-1" evidence="1">
    <location>
        <begin position="312"/>
        <end position="662"/>
    </location>
</feature>
<feature type="region of interest" description="Disordered" evidence="9">
    <location>
        <begin position="336"/>
        <end position="377"/>
    </location>
</feature>
<feature type="region of interest" description="Disordered" evidence="9">
    <location>
        <begin position="440"/>
        <end position="464"/>
    </location>
</feature>
<feature type="region of interest" description="Catalytic" evidence="1">
    <location>
        <begin position="486"/>
        <end position="776"/>
    </location>
</feature>
<feature type="region of interest" description="Mediates interaction with BRPF1, required for histone H3 acetyltransferase activity" evidence="1">
    <location>
        <begin position="505"/>
        <end position="808"/>
    </location>
</feature>
<feature type="region of interest" description="Disordered" evidence="9">
    <location>
        <begin position="783"/>
        <end position="947"/>
    </location>
</feature>
<feature type="region of interest" description="Disordered" evidence="9">
    <location>
        <begin position="982"/>
        <end position="1079"/>
    </location>
</feature>
<feature type="region of interest" description="Disordered" evidence="9">
    <location>
        <begin position="1096"/>
        <end position="1175"/>
    </location>
</feature>
<feature type="region of interest" description="Disordered" evidence="9">
    <location>
        <begin position="1195"/>
        <end position="1436"/>
    </location>
</feature>
<feature type="region of interest" description="Disordered" evidence="9">
    <location>
        <begin position="1450"/>
        <end position="1567"/>
    </location>
</feature>
<feature type="region of interest" description="Interaction with PML" evidence="1">
    <location>
        <begin position="1510"/>
        <end position="1735"/>
    </location>
</feature>
<feature type="region of interest" description="Interaction with RUNX1-2" evidence="1">
    <location>
        <begin position="1510"/>
        <end position="1635"/>
    </location>
</feature>
<feature type="region of interest" description="Disordered" evidence="9">
    <location>
        <begin position="1630"/>
        <end position="1702"/>
    </location>
</feature>
<feature type="region of interest" description="Required for activation of RUNX1-2" evidence="1">
    <location>
        <begin position="1907"/>
        <end position="1942"/>
    </location>
</feature>
<feature type="compositionally biased region" description="Polar residues" evidence="9">
    <location>
        <begin position="444"/>
        <end position="457"/>
    </location>
</feature>
<feature type="compositionally biased region" description="Acidic residues" evidence="9">
    <location>
        <begin position="785"/>
        <end position="797"/>
    </location>
</feature>
<feature type="compositionally biased region" description="Basic and acidic residues" evidence="9">
    <location>
        <begin position="798"/>
        <end position="840"/>
    </location>
</feature>
<feature type="compositionally biased region" description="Basic residues" evidence="9">
    <location>
        <begin position="865"/>
        <end position="874"/>
    </location>
</feature>
<feature type="compositionally biased region" description="Basic and acidic residues" evidence="9">
    <location>
        <begin position="875"/>
        <end position="886"/>
    </location>
</feature>
<feature type="compositionally biased region" description="Basic and acidic residues" evidence="9">
    <location>
        <begin position="903"/>
        <end position="916"/>
    </location>
</feature>
<feature type="compositionally biased region" description="Basic residues" evidence="9">
    <location>
        <begin position="1008"/>
        <end position="1029"/>
    </location>
</feature>
<feature type="compositionally biased region" description="Low complexity" evidence="9">
    <location>
        <begin position="1030"/>
        <end position="1041"/>
    </location>
</feature>
<feature type="compositionally biased region" description="Acidic residues" evidence="9">
    <location>
        <begin position="1042"/>
        <end position="1052"/>
    </location>
</feature>
<feature type="compositionally biased region" description="Acidic residues" evidence="9">
    <location>
        <begin position="1064"/>
        <end position="1077"/>
    </location>
</feature>
<feature type="compositionally biased region" description="Acidic residues" evidence="9">
    <location>
        <begin position="1106"/>
        <end position="1119"/>
    </location>
</feature>
<feature type="compositionally biased region" description="Polar residues" evidence="9">
    <location>
        <begin position="1135"/>
        <end position="1146"/>
    </location>
</feature>
<feature type="compositionally biased region" description="Basic residues" evidence="9">
    <location>
        <begin position="1147"/>
        <end position="1173"/>
    </location>
</feature>
<feature type="compositionally biased region" description="Basic and acidic residues" evidence="9">
    <location>
        <begin position="1203"/>
        <end position="1228"/>
    </location>
</feature>
<feature type="compositionally biased region" description="Acidic residues" evidence="9">
    <location>
        <begin position="1229"/>
        <end position="1240"/>
    </location>
</feature>
<feature type="compositionally biased region" description="Acidic residues" evidence="9">
    <location>
        <begin position="1281"/>
        <end position="1298"/>
    </location>
</feature>
<feature type="compositionally biased region" description="Basic and acidic residues" evidence="9">
    <location>
        <begin position="1316"/>
        <end position="1333"/>
    </location>
</feature>
<feature type="compositionally biased region" description="Basic and acidic residues" evidence="9">
    <location>
        <begin position="1351"/>
        <end position="1360"/>
    </location>
</feature>
<feature type="compositionally biased region" description="Basic and acidic residues" evidence="9">
    <location>
        <begin position="1392"/>
        <end position="1413"/>
    </location>
</feature>
<feature type="compositionally biased region" description="Low complexity" evidence="9">
    <location>
        <begin position="1472"/>
        <end position="1496"/>
    </location>
</feature>
<feature type="compositionally biased region" description="Polar residues" evidence="9">
    <location>
        <begin position="1501"/>
        <end position="1522"/>
    </location>
</feature>
<feature type="compositionally biased region" description="Low complexity" evidence="9">
    <location>
        <begin position="1527"/>
        <end position="1541"/>
    </location>
</feature>
<feature type="compositionally biased region" description="Polar residues" evidence="9">
    <location>
        <begin position="1549"/>
        <end position="1567"/>
    </location>
</feature>
<feature type="compositionally biased region" description="Pro residues" evidence="9">
    <location>
        <begin position="1639"/>
        <end position="1658"/>
    </location>
</feature>
<feature type="compositionally biased region" description="Pro residues" evidence="9">
    <location>
        <begin position="1665"/>
        <end position="1693"/>
    </location>
</feature>
<feature type="active site" description="Proton donor/acceptor" evidence="4">
    <location>
        <position position="678"/>
    </location>
</feature>
<feature type="binding site" evidence="3">
    <location>
        <begin position="643"/>
        <end position="647"/>
    </location>
    <ligand>
        <name>acetyl-CoA</name>
        <dbReference type="ChEBI" id="CHEBI:57288"/>
    </ligand>
</feature>
<feature type="binding site" evidence="3">
    <location>
        <begin position="652"/>
        <end position="658"/>
    </location>
    <ligand>
        <name>acetyl-CoA</name>
        <dbReference type="ChEBI" id="CHEBI:57288"/>
    </ligand>
</feature>
<feature type="binding site" evidence="3">
    <location>
        <position position="682"/>
    </location>
    <ligand>
        <name>acetyl-CoA</name>
        <dbReference type="ChEBI" id="CHEBI:57288"/>
    </ligand>
</feature>
<feature type="modified residue" description="N6-acetyllysine" evidence="2">
    <location>
        <position position="172"/>
    </location>
</feature>
<feature type="modified residue" description="N6-acetyllysine" evidence="3">
    <location>
        <position position="350"/>
    </location>
</feature>
<feature type="modified residue" description="N6-acetyllysine" evidence="3">
    <location>
        <position position="355"/>
    </location>
</feature>
<feature type="modified residue" description="Phosphothreonine; by PKB/AKT1" evidence="3">
    <location>
        <position position="369"/>
    </location>
</feature>
<feature type="modified residue" description="Phosphoserine" evidence="3">
    <location>
        <position position="419"/>
    </location>
</feature>
<feature type="modified residue" description="Phosphoserine" evidence="3">
    <location>
        <position position="471"/>
    </location>
</feature>
<feature type="modified residue" description="N6-acetyllysine; by autocatalysis" evidence="3">
    <location>
        <position position="602"/>
    </location>
</feature>
<feature type="modified residue" description="Phosphoserine" evidence="2">
    <location>
        <position position="785"/>
    </location>
</feature>
<feature type="modified residue" description="N6-acetyllysine" evidence="2">
    <location>
        <position position="815"/>
    </location>
</feature>
<feature type="modified residue" description="Phosphotyrosine" evidence="11">
    <location>
        <position position="900"/>
    </location>
</feature>
<feature type="modified residue" description="Phosphoserine" evidence="3">
    <location>
        <position position="940"/>
    </location>
</feature>
<feature type="modified residue" description="Phosphoserine" evidence="3">
    <location>
        <position position="953"/>
    </location>
</feature>
<feature type="modified residue" description="N6-acetyllysine" evidence="3">
    <location>
        <position position="1006"/>
    </location>
</feature>
<feature type="modified residue" description="Phosphoserine" evidence="3">
    <location>
        <position position="1088"/>
    </location>
</feature>
<feature type="modified residue" description="Phosphoserine" evidence="3">
    <location>
        <position position="1089"/>
    </location>
</feature>
<feature type="modified residue" description="Phosphoserine" evidence="12">
    <location>
        <position position="1114"/>
    </location>
</feature>
<feature type="cross-link" description="Glycyl lysine isopeptide (Lys-Gly) (interchain with G-Cter in SUMO2)" evidence="3">
    <location>
        <position position="835"/>
    </location>
</feature>
<organism>
    <name type="scientific">Rattus norvegicus</name>
    <name type="common">Rat</name>
    <dbReference type="NCBI Taxonomy" id="10116"/>
    <lineage>
        <taxon>Eukaryota</taxon>
        <taxon>Metazoa</taxon>
        <taxon>Chordata</taxon>
        <taxon>Craniata</taxon>
        <taxon>Vertebrata</taxon>
        <taxon>Euteleostomi</taxon>
        <taxon>Mammalia</taxon>
        <taxon>Eutheria</taxon>
        <taxon>Euarchontoglires</taxon>
        <taxon>Glires</taxon>
        <taxon>Rodentia</taxon>
        <taxon>Myomorpha</taxon>
        <taxon>Muroidea</taxon>
        <taxon>Muridae</taxon>
        <taxon>Murinae</taxon>
        <taxon>Rattus</taxon>
    </lineage>
</organism>
<protein>
    <recommendedName>
        <fullName>Histone acetyltransferase KAT6A</fullName>
        <ecNumber evidence="3">2.3.1.48</ecNumber>
    </recommendedName>
    <alternativeName>
        <fullName>MOZ, YBF2/SAS3, SAS2 and TIP60 protein 3</fullName>
        <shortName>MYST-3</shortName>
    </alternativeName>
    <alternativeName>
        <fullName>Monocytic leukemia zinc finger homolog</fullName>
    </alternativeName>
    <alternativeName>
        <fullName>Monocytic leukemia zinc finger protein</fullName>
    </alternativeName>
</protein>
<dbReference type="EC" id="2.3.1.48" evidence="3"/>
<dbReference type="EMBL" id="AABR03100194">
    <property type="status" value="NOT_ANNOTATED_CDS"/>
    <property type="molecule type" value="Genomic_DNA"/>
</dbReference>
<dbReference type="EMBL" id="AB195309">
    <property type="protein sequence ID" value="BAD72833.1"/>
    <property type="molecule type" value="mRNA"/>
</dbReference>
<dbReference type="RefSeq" id="NP_001094040.1">
    <property type="nucleotide sequence ID" value="NM_001100570.4"/>
</dbReference>
<dbReference type="RefSeq" id="XP_038950514.1">
    <property type="nucleotide sequence ID" value="XM_039094586.2"/>
</dbReference>
<dbReference type="RefSeq" id="XP_038950515.1">
    <property type="nucleotide sequence ID" value="XM_039094587.2"/>
</dbReference>
<dbReference type="BMRB" id="Q5TKR9"/>
<dbReference type="SMR" id="Q5TKR9"/>
<dbReference type="FunCoup" id="Q5TKR9">
    <property type="interactions" value="2680"/>
</dbReference>
<dbReference type="STRING" id="10116.ENSRNOP00000037279"/>
<dbReference type="CarbonylDB" id="Q5TKR9"/>
<dbReference type="GlyGen" id="Q5TKR9">
    <property type="glycosylation" value="1 site"/>
</dbReference>
<dbReference type="iPTMnet" id="Q5TKR9"/>
<dbReference type="PhosphoSitePlus" id="Q5TKR9"/>
<dbReference type="PaxDb" id="10116-ENSRNOP00000037279"/>
<dbReference type="Ensembl" id="ENSRNOT00000078743.2">
    <property type="protein sequence ID" value="ENSRNOP00000071789.2"/>
    <property type="gene ID" value="ENSRNOG00000025174.6"/>
</dbReference>
<dbReference type="GeneID" id="306571"/>
<dbReference type="KEGG" id="rno:306571"/>
<dbReference type="UCSC" id="RGD:1304892">
    <property type="organism name" value="rat"/>
</dbReference>
<dbReference type="AGR" id="RGD:1304892"/>
<dbReference type="CTD" id="7994"/>
<dbReference type="RGD" id="1304892">
    <property type="gene designation" value="Kat6a"/>
</dbReference>
<dbReference type="eggNOG" id="KOG2747">
    <property type="taxonomic scope" value="Eukaryota"/>
</dbReference>
<dbReference type="GeneTree" id="ENSGT00940000156962"/>
<dbReference type="InParanoid" id="Q5TKR9"/>
<dbReference type="OMA" id="ECIIEPI"/>
<dbReference type="OrthoDB" id="787137at2759"/>
<dbReference type="PhylomeDB" id="Q5TKR9"/>
<dbReference type="TreeFam" id="TF106483"/>
<dbReference type="Reactome" id="R-RNO-3214847">
    <property type="pathway name" value="HATs acetylate histones"/>
</dbReference>
<dbReference type="Reactome" id="R-RNO-6804758">
    <property type="pathway name" value="Regulation of TP53 Activity through Acetylation"/>
</dbReference>
<dbReference type="PRO" id="PR:Q5TKR9"/>
<dbReference type="Proteomes" id="UP000002494">
    <property type="component" value="Chromosome 16"/>
</dbReference>
<dbReference type="GO" id="GO:0000785">
    <property type="term" value="C:chromatin"/>
    <property type="evidence" value="ECO:0000318"/>
    <property type="project" value="GO_Central"/>
</dbReference>
<dbReference type="GO" id="GO:0005829">
    <property type="term" value="C:cytosol"/>
    <property type="evidence" value="ECO:0007669"/>
    <property type="project" value="Ensembl"/>
</dbReference>
<dbReference type="GO" id="GO:0070776">
    <property type="term" value="C:MOZ/MORF histone acetyltransferase complex"/>
    <property type="evidence" value="ECO:0000250"/>
    <property type="project" value="UniProtKB"/>
</dbReference>
<dbReference type="GO" id="GO:0016607">
    <property type="term" value="C:nuclear speck"/>
    <property type="evidence" value="ECO:0007669"/>
    <property type="project" value="Ensembl"/>
</dbReference>
<dbReference type="GO" id="GO:0005730">
    <property type="term" value="C:nucleolus"/>
    <property type="evidence" value="ECO:0007669"/>
    <property type="project" value="UniProtKB-SubCell"/>
</dbReference>
<dbReference type="GO" id="GO:0000786">
    <property type="term" value="C:nucleosome"/>
    <property type="evidence" value="ECO:0007669"/>
    <property type="project" value="InterPro"/>
</dbReference>
<dbReference type="GO" id="GO:0005634">
    <property type="term" value="C:nucleus"/>
    <property type="evidence" value="ECO:0000250"/>
    <property type="project" value="UniProtKB"/>
</dbReference>
<dbReference type="GO" id="GO:0016605">
    <property type="term" value="C:PML body"/>
    <property type="evidence" value="ECO:0000250"/>
    <property type="project" value="UniProtKB"/>
</dbReference>
<dbReference type="GO" id="GO:0003682">
    <property type="term" value="F:chromatin binding"/>
    <property type="evidence" value="ECO:0000266"/>
    <property type="project" value="RGD"/>
</dbReference>
<dbReference type="GO" id="GO:0003677">
    <property type="term" value="F:DNA binding"/>
    <property type="evidence" value="ECO:0000250"/>
    <property type="project" value="UniProtKB"/>
</dbReference>
<dbReference type="GO" id="GO:0140297">
    <property type="term" value="F:DNA-binding transcription factor binding"/>
    <property type="evidence" value="ECO:0000266"/>
    <property type="project" value="RGD"/>
</dbReference>
<dbReference type="GO" id="GO:0004402">
    <property type="term" value="F:histone acetyltransferase activity"/>
    <property type="evidence" value="ECO:0000266"/>
    <property type="project" value="RGD"/>
</dbReference>
<dbReference type="GO" id="GO:0010484">
    <property type="term" value="F:histone H3 acetyltransferase activity"/>
    <property type="evidence" value="ECO:0000318"/>
    <property type="project" value="GO_Central"/>
</dbReference>
<dbReference type="GO" id="GO:0036408">
    <property type="term" value="F:histone H3K14 acetyltransferase activity"/>
    <property type="evidence" value="ECO:0000250"/>
    <property type="project" value="UniProtKB"/>
</dbReference>
<dbReference type="GO" id="GO:0043992">
    <property type="term" value="F:histone H3K9 acetyltransferase activity"/>
    <property type="evidence" value="ECO:0000266"/>
    <property type="project" value="RGD"/>
</dbReference>
<dbReference type="GO" id="GO:0043997">
    <property type="term" value="F:histone H4K12 acetyltransferase activity"/>
    <property type="evidence" value="ECO:0000266"/>
    <property type="project" value="RGD"/>
</dbReference>
<dbReference type="GO" id="GO:0046972">
    <property type="term" value="F:histone H4K16 acetyltransferase activity"/>
    <property type="evidence" value="ECO:0000266"/>
    <property type="project" value="RGD"/>
</dbReference>
<dbReference type="GO" id="GO:0043995">
    <property type="term" value="F:histone H4K5 acetyltransferase activity"/>
    <property type="evidence" value="ECO:0000250"/>
    <property type="project" value="UniProtKB"/>
</dbReference>
<dbReference type="GO" id="GO:0043996">
    <property type="term" value="F:histone H4K8 acetyltransferase activity"/>
    <property type="evidence" value="ECO:0000266"/>
    <property type="project" value="RGD"/>
</dbReference>
<dbReference type="GO" id="GO:0003713">
    <property type="term" value="F:transcription coactivator activity"/>
    <property type="evidence" value="ECO:0000266"/>
    <property type="project" value="RGD"/>
</dbReference>
<dbReference type="GO" id="GO:0003712">
    <property type="term" value="F:transcription coregulator activity"/>
    <property type="evidence" value="ECO:0000318"/>
    <property type="project" value="GO_Central"/>
</dbReference>
<dbReference type="GO" id="GO:0008270">
    <property type="term" value="F:zinc ion binding"/>
    <property type="evidence" value="ECO:0000250"/>
    <property type="project" value="UniProtKB"/>
</dbReference>
<dbReference type="GO" id="GO:0035909">
    <property type="term" value="P:aorta morphogenesis"/>
    <property type="evidence" value="ECO:0000266"/>
    <property type="project" value="RGD"/>
</dbReference>
<dbReference type="GO" id="GO:0090398">
    <property type="term" value="P:cellular senescence"/>
    <property type="evidence" value="ECO:0000250"/>
    <property type="project" value="UniProtKB"/>
</dbReference>
<dbReference type="GO" id="GO:0035162">
    <property type="term" value="P:embryonic hemopoiesis"/>
    <property type="evidence" value="ECO:0000266"/>
    <property type="project" value="RGD"/>
</dbReference>
<dbReference type="GO" id="GO:0060325">
    <property type="term" value="P:face morphogenesis"/>
    <property type="evidence" value="ECO:0000266"/>
    <property type="project" value="RGD"/>
</dbReference>
<dbReference type="GO" id="GO:0003007">
    <property type="term" value="P:heart morphogenesis"/>
    <property type="evidence" value="ECO:0000266"/>
    <property type="project" value="RGD"/>
</dbReference>
<dbReference type="GO" id="GO:0030099">
    <property type="term" value="P:myeloid cell differentiation"/>
    <property type="evidence" value="ECO:0000250"/>
    <property type="project" value="UniProtKB"/>
</dbReference>
<dbReference type="GO" id="GO:0045892">
    <property type="term" value="P:negative regulation of DNA-templated transcription"/>
    <property type="evidence" value="ECO:0000250"/>
    <property type="project" value="UniProtKB"/>
</dbReference>
<dbReference type="GO" id="GO:0006334">
    <property type="term" value="P:nucleosome assembly"/>
    <property type="evidence" value="ECO:0007669"/>
    <property type="project" value="InterPro"/>
</dbReference>
<dbReference type="GO" id="GO:0045893">
    <property type="term" value="P:positive regulation of DNA-templated transcription"/>
    <property type="evidence" value="ECO:0000250"/>
    <property type="project" value="UniProtKB"/>
</dbReference>
<dbReference type="GO" id="GO:0010628">
    <property type="term" value="P:positive regulation of gene expression"/>
    <property type="evidence" value="ECO:0000314"/>
    <property type="project" value="RGD"/>
</dbReference>
<dbReference type="GO" id="GO:0006473">
    <property type="term" value="P:protein acetylation"/>
    <property type="evidence" value="ECO:0000250"/>
    <property type="project" value="UniProtKB"/>
</dbReference>
<dbReference type="GO" id="GO:0006355">
    <property type="term" value="P:regulation of DNA-templated transcription"/>
    <property type="evidence" value="ECO:0000266"/>
    <property type="project" value="RGD"/>
</dbReference>
<dbReference type="GO" id="GO:0006357">
    <property type="term" value="P:regulation of transcription by RNA polymerase II"/>
    <property type="evidence" value="ECO:0000318"/>
    <property type="project" value="GO_Central"/>
</dbReference>
<dbReference type="GO" id="GO:0035019">
    <property type="term" value="P:somatic stem cell population maintenance"/>
    <property type="evidence" value="ECO:0000266"/>
    <property type="project" value="RGD"/>
</dbReference>
<dbReference type="CDD" id="cd04301">
    <property type="entry name" value="NAT_SF"/>
    <property type="match status" value="1"/>
</dbReference>
<dbReference type="CDD" id="cd15618">
    <property type="entry name" value="PHD1_MOZ_MORF"/>
    <property type="match status" value="1"/>
</dbReference>
<dbReference type="CDD" id="cd15527">
    <property type="entry name" value="PHD2_KAT6A_6B"/>
    <property type="match status" value="1"/>
</dbReference>
<dbReference type="FunFam" id="1.10.10.10:FF:000123">
    <property type="entry name" value="Histone acetyltransferase"/>
    <property type="match status" value="1"/>
</dbReference>
<dbReference type="FunFam" id="1.10.10.10:FF:000132">
    <property type="entry name" value="Histone acetyltransferase"/>
    <property type="match status" value="1"/>
</dbReference>
<dbReference type="FunFam" id="3.30.40.10:FF:000035">
    <property type="entry name" value="Histone acetyltransferase"/>
    <property type="match status" value="1"/>
</dbReference>
<dbReference type="FunFam" id="3.30.60.60:FF:000002">
    <property type="entry name" value="Histone acetyltransferase"/>
    <property type="match status" value="1"/>
</dbReference>
<dbReference type="FunFam" id="3.40.630.30:FF:000001">
    <property type="entry name" value="Histone acetyltransferase"/>
    <property type="match status" value="1"/>
</dbReference>
<dbReference type="Gene3D" id="3.40.630.30">
    <property type="match status" value="1"/>
</dbReference>
<dbReference type="Gene3D" id="3.30.60.60">
    <property type="entry name" value="N-acetyl transferase-like"/>
    <property type="match status" value="1"/>
</dbReference>
<dbReference type="Gene3D" id="1.10.10.10">
    <property type="entry name" value="Winged helix-like DNA-binding domain superfamily/Winged helix DNA-binding domain"/>
    <property type="match status" value="2"/>
</dbReference>
<dbReference type="Gene3D" id="3.30.40.10">
    <property type="entry name" value="Zinc/RING finger domain, C3HC4 (zinc finger)"/>
    <property type="match status" value="1"/>
</dbReference>
<dbReference type="InterPro" id="IPR016181">
    <property type="entry name" value="Acyl_CoA_acyltransferase"/>
</dbReference>
<dbReference type="InterPro" id="IPR002717">
    <property type="entry name" value="HAT_MYST-type"/>
</dbReference>
<dbReference type="InterPro" id="IPR005818">
    <property type="entry name" value="Histone_H1/H5_H15"/>
</dbReference>
<dbReference type="InterPro" id="IPR050603">
    <property type="entry name" value="MYST_HAT"/>
</dbReference>
<dbReference type="InterPro" id="IPR048589">
    <property type="entry name" value="SAMD1-like_WH"/>
</dbReference>
<dbReference type="InterPro" id="IPR036388">
    <property type="entry name" value="WH-like_DNA-bd_sf"/>
</dbReference>
<dbReference type="InterPro" id="IPR036390">
    <property type="entry name" value="WH_DNA-bd_sf"/>
</dbReference>
<dbReference type="InterPro" id="IPR040706">
    <property type="entry name" value="Zf-MYST"/>
</dbReference>
<dbReference type="InterPro" id="IPR011011">
    <property type="entry name" value="Znf_FYVE_PHD"/>
</dbReference>
<dbReference type="InterPro" id="IPR001965">
    <property type="entry name" value="Znf_PHD"/>
</dbReference>
<dbReference type="InterPro" id="IPR019787">
    <property type="entry name" value="Znf_PHD-finger"/>
</dbReference>
<dbReference type="InterPro" id="IPR013083">
    <property type="entry name" value="Znf_RING/FYVE/PHD"/>
</dbReference>
<dbReference type="PANTHER" id="PTHR10615">
    <property type="entry name" value="HISTONE ACETYLTRANSFERASE"/>
    <property type="match status" value="1"/>
</dbReference>
<dbReference type="PANTHER" id="PTHR10615:SF26">
    <property type="entry name" value="HISTONE ACETYLTRANSFERASE KAT6A"/>
    <property type="match status" value="1"/>
</dbReference>
<dbReference type="Pfam" id="PF01853">
    <property type="entry name" value="MOZ_SAS"/>
    <property type="match status" value="1"/>
</dbReference>
<dbReference type="Pfam" id="PF00628">
    <property type="entry name" value="PHD"/>
    <property type="match status" value="2"/>
</dbReference>
<dbReference type="Pfam" id="PF21524">
    <property type="entry name" value="SAMD1_WH"/>
    <property type="match status" value="1"/>
</dbReference>
<dbReference type="Pfam" id="PF17772">
    <property type="entry name" value="zf-MYST"/>
    <property type="match status" value="1"/>
</dbReference>
<dbReference type="SMART" id="SM00526">
    <property type="entry name" value="H15"/>
    <property type="match status" value="1"/>
</dbReference>
<dbReference type="SMART" id="SM00249">
    <property type="entry name" value="PHD"/>
    <property type="match status" value="2"/>
</dbReference>
<dbReference type="SUPFAM" id="SSF55729">
    <property type="entry name" value="Acyl-CoA N-acyltransferases (Nat)"/>
    <property type="match status" value="1"/>
</dbReference>
<dbReference type="SUPFAM" id="SSF57903">
    <property type="entry name" value="FYVE/PHD zinc finger"/>
    <property type="match status" value="2"/>
</dbReference>
<dbReference type="SUPFAM" id="SSF46785">
    <property type="entry name" value="Winged helix' DNA-binding domain"/>
    <property type="match status" value="1"/>
</dbReference>
<dbReference type="PROSITE" id="PS51504">
    <property type="entry name" value="H15"/>
    <property type="match status" value="1"/>
</dbReference>
<dbReference type="PROSITE" id="PS51726">
    <property type="entry name" value="MYST_HAT"/>
    <property type="match status" value="1"/>
</dbReference>
<dbReference type="PROSITE" id="PS52014">
    <property type="entry name" value="SAMD1_WH"/>
    <property type="match status" value="1"/>
</dbReference>
<dbReference type="PROSITE" id="PS01359">
    <property type="entry name" value="ZF_PHD_1"/>
    <property type="match status" value="1"/>
</dbReference>
<dbReference type="PROSITE" id="PS50016">
    <property type="entry name" value="ZF_PHD_2"/>
    <property type="match status" value="2"/>
</dbReference>
<comment type="function">
    <text evidence="3">Histone acetyltransferase that acetylates lysine residues in histone H3 and histone H4 (in vitro). Component of the MOZ/MORF complex which has a histone H3 acetyltransferase activity. May act as a transcriptional coactivator for RUNX1 and RUNX2 (By similarity). Acetylates p53/TP53 at 'Lys-120' and 'Lys-382' and controls its transcriptional activity via association with PML (By similarity).</text>
</comment>
<comment type="catalytic activity">
    <reaction evidence="3">
        <text>L-lysyl-[protein] + acetyl-CoA = N(6)-acetyl-L-lysyl-[protein] + CoA + H(+)</text>
        <dbReference type="Rhea" id="RHEA:45948"/>
        <dbReference type="Rhea" id="RHEA-COMP:9752"/>
        <dbReference type="Rhea" id="RHEA-COMP:10731"/>
        <dbReference type="ChEBI" id="CHEBI:15378"/>
        <dbReference type="ChEBI" id="CHEBI:29969"/>
        <dbReference type="ChEBI" id="CHEBI:57287"/>
        <dbReference type="ChEBI" id="CHEBI:57288"/>
        <dbReference type="ChEBI" id="CHEBI:61930"/>
        <dbReference type="EC" id="2.3.1.48"/>
    </reaction>
</comment>
<comment type="subunit">
    <text evidence="3">Component of the MOZ/MORF complex composed at least of ING5, KAT6A, KAT6B, MEAF6 and one of BRPF1, BRD1/BRPF2 and BRPF3. Interacts with RUNX1; phosphorylation of RUNX1 enhances the interaction. Interacts with RUNX2. Interacts with p53/TP53. Interacts with PML and this interaction positively regulates its acetylation activity towards p53/TP53.</text>
</comment>
<comment type="subcellular location">
    <subcellularLocation>
        <location evidence="6">Nucleus</location>
    </subcellularLocation>
    <subcellularLocation>
        <location evidence="3">Nucleus</location>
        <location evidence="3">Nucleolus</location>
    </subcellularLocation>
    <subcellularLocation>
        <location evidence="3">Nucleus</location>
        <location evidence="3">Nucleoplasm</location>
    </subcellularLocation>
    <subcellularLocation>
        <location evidence="3">Nucleus</location>
        <location evidence="3">PML body</location>
    </subcellularLocation>
    <text evidence="3">Recruited into PML body after DNA damage.</text>
</comment>
<comment type="domain">
    <text evidence="1">The N-terminus is involved in transcriptional activation while the C-terminus is involved in transcriptional repression.</text>
</comment>
<comment type="PTM">
    <text evidence="4">Autoacetylated. Autoacetylation at Lys-602 is required for proper function.</text>
</comment>
<comment type="PTM">
    <text evidence="1">Phosphorylation at Thr-369 by PKB/AKT1 inhibits its interaction with PML and negatively regulates its acetylation activity towards p53/TP53.</text>
</comment>
<comment type="similarity">
    <text evidence="10">Belongs to the MYST (SAS/MOZ) family.</text>
</comment>
<gene>
    <name type="primary">Kat6a</name>
    <name type="synonym">Moz</name>
    <name type="synonym">Myst3</name>
</gene>
<sequence>MVKLANPLYTQWILEAIKKVKKQKQRPSEERICNAVSSSHGLDRKTVLEQLELSVKDGTILKVSNKGLNSYKDPDNPGRIALPKPRNHGKLDNKQSVDWNKLLKRAFEGLAESGGSTLKSIERFLKSQKDVSAACGGTAASGFHQQLRLAIKRAVGHGRLLKDGPLYRLNTKAANAEGKEGCESLSCLPPVSLLPHEKDKPVAEPIPICSFCLGTKEQNREKKPEDLISCADCGNSGHPSCLKFSPELTVRVRALRWQCIECKTCSSCRDQGKNADNMLFCDSCDRGFHMECCDPPLTRMPKGMWICQICRPRKKGRKLLQKKAAQIKRRYANPIGRPKNRLKKQSTVSKGPFSKVRTGPGRGRKRKITVSSQSASSSEEGYLERIDGLDFCRDSSAPLKFNKKTKGLIDGLTKFFTPSPDGRKARGEAVDYSELRIRKKGNRKSSTSHWPTDNQDGWESKQESEERLFGSQEIMTERDMELFRDIQEQALQKVGVTGPPDPQVRCPSVIEFGKYEIHTWYSSPYPQEYSRLPKLYLCEFCLKYMKSRTILQQHMKKCGWFHPPANEIYRKNNISVFEVDGNVSTIYCQNLCLLAKLFLDHKTLYYDVEPFLFYVLTQNDVKGCHLVGYFSKEKHCQQKYNVSCIMILPQYQRKGYGRFLIDFSYLLSKREGQAGSPEKPLSDLGRLSYMAYWKSVILECLYHQNDKQISIKKLSKLTGVCPQDITSTLHHLRMLDFRSDQFVIIRREKLIQDHMAKLQLNLRPVDVDPECLRWTPVIVSNSVVSEEEDEEADDGEKEEPQGQERELETRERVGKSVSRENKDQDSSSLIESEKKPEVKELASSSRLSKQALVRDSLPANSQPPRRGRCGRKNRKTQERFGDKDSKMLVGETLSTSQEQYGECEEKSAASRERYTEVGEQPAAPQAQADGNPDIPKGRFSESADLWRGQLKKSPETLKCRLPEGNDRLPCCYTDGDRAVFRGFSESSEEEEEPESPRSNSPPVLTKPTLKRKKPILHRRRRVRKRKHHNSSVVTETISETTEVLDEPFEDSDSERPMPRLEPTFEIEEEEEEEDENELFPRGYFHCLSSQDILRCQASSKRTASKDEEEEEEESDDADDTPVLKPVSLLRKCDVNSASLEPDTSTPMKKKKGWPKGKSRKPIHWKKRPGRKPGFKLNQDIIAVSTQECIVEPIVPIKPGRKPRTQESEELVEVKEGLVEERKEEMHTEADEEAEEEEDAASSDIRAMSPLDSSNSPDADPKEPEAEEEEEKPLDDPRQSEEEPQELEEQEQEEEDEVTAEANQNEDHDADDEDDGHLDSLKTKEPEGQPAREDGTEEPGTQESFLDASIQDSRENAKDKDETEADSEEEQPSHEASVGSETMPGSEEDHEEDSNTKEELIELKEEEEIPHSELDLETVQAVQSLTQEESSEHEGAYQDCEETLAACQTLQSYTHTDEDPQMSMVEDCHASEHNSPISSIPSHPSQSVRSVSSPSMPALESGYTQISPEQGSLSAPSMQNMETSPMMDVPSVSDHSQQVVDSGFSDLGSIESTTENYENPSSYDSTMGSSICGNNSSQSSCSYGGLSSSSSLTQNSCVVTQQMASMGNSCSMLQQNSVQPATNCNIKSPQTCVVERPPSNQQPPPPPPPPPPPQQPQPQPQQQAAPQPPPPQPQQQPPPPPQQQPQPPPPPQQQPPLSQCSMNNSFTAAPMIMEIPESGGTGNISIYERIPGDFGAGSYSQPSATFSLAKLQQLTNTIMDPHAMPYSHSPAVTSYATSVSLSNTGLAQLAPSHPLAGTPQAQATMTPPPNLAPTTMNLTSPLLQCNMSATNIGIPHTQRLQGQMPVKGHISIRSKSAPLPSATAHQQQLYGRSPPAVAMQAGPRALAVQRGMNMGVNLMPTPAYNVNSMNMNTLNAMNSYRMTQPMMNSSYHSNPAYMNQTAQYPMQMQMGMMGSQAYTQQPMQPNPHGNMMYTGPSHHSYMNAAGVPKQSLNGPYMRR</sequence>
<proteinExistence type="evidence at protein level"/>